<name>MURB_BURO1</name>
<proteinExistence type="inferred from homology"/>
<reference key="1">
    <citation type="submission" date="2006-05" db="EMBL/GenBank/DDBJ databases">
        <title>Complete sequence of chromosome 1 of Burkholderia cenocepacia AU 1054.</title>
        <authorList>
            <consortium name="US DOE Joint Genome Institute"/>
            <person name="Copeland A."/>
            <person name="Lucas S."/>
            <person name="Lapidus A."/>
            <person name="Barry K."/>
            <person name="Detter J.C."/>
            <person name="Glavina del Rio T."/>
            <person name="Hammon N."/>
            <person name="Israni S."/>
            <person name="Dalin E."/>
            <person name="Tice H."/>
            <person name="Pitluck S."/>
            <person name="Chain P."/>
            <person name="Malfatti S."/>
            <person name="Shin M."/>
            <person name="Vergez L."/>
            <person name="Schmutz J."/>
            <person name="Larimer F."/>
            <person name="Land M."/>
            <person name="Hauser L."/>
            <person name="Kyrpides N."/>
            <person name="Lykidis A."/>
            <person name="LiPuma J.J."/>
            <person name="Konstantinidis K."/>
            <person name="Tiedje J.M."/>
            <person name="Richardson P."/>
        </authorList>
    </citation>
    <scope>NUCLEOTIDE SEQUENCE [LARGE SCALE GENOMIC DNA]</scope>
    <source>
        <strain>AU 1054</strain>
    </source>
</reference>
<accession>Q1BU59</accession>
<keyword id="KW-0131">Cell cycle</keyword>
<keyword id="KW-0132">Cell division</keyword>
<keyword id="KW-0133">Cell shape</keyword>
<keyword id="KW-0961">Cell wall biogenesis/degradation</keyword>
<keyword id="KW-0963">Cytoplasm</keyword>
<keyword id="KW-0274">FAD</keyword>
<keyword id="KW-0285">Flavoprotein</keyword>
<keyword id="KW-0521">NADP</keyword>
<keyword id="KW-0560">Oxidoreductase</keyword>
<keyword id="KW-0573">Peptidoglycan synthesis</keyword>
<comment type="function">
    <text evidence="1">Cell wall formation.</text>
</comment>
<comment type="catalytic activity">
    <reaction evidence="1">
        <text>UDP-N-acetyl-alpha-D-muramate + NADP(+) = UDP-N-acetyl-3-O-(1-carboxyvinyl)-alpha-D-glucosamine + NADPH + H(+)</text>
        <dbReference type="Rhea" id="RHEA:12248"/>
        <dbReference type="ChEBI" id="CHEBI:15378"/>
        <dbReference type="ChEBI" id="CHEBI:57783"/>
        <dbReference type="ChEBI" id="CHEBI:58349"/>
        <dbReference type="ChEBI" id="CHEBI:68483"/>
        <dbReference type="ChEBI" id="CHEBI:70757"/>
        <dbReference type="EC" id="1.3.1.98"/>
    </reaction>
</comment>
<comment type="cofactor">
    <cofactor evidence="1">
        <name>FAD</name>
        <dbReference type="ChEBI" id="CHEBI:57692"/>
    </cofactor>
</comment>
<comment type="pathway">
    <text evidence="1">Cell wall biogenesis; peptidoglycan biosynthesis.</text>
</comment>
<comment type="subcellular location">
    <subcellularLocation>
        <location evidence="1">Cytoplasm</location>
    </subcellularLocation>
</comment>
<comment type="similarity">
    <text evidence="1">Belongs to the MurB family.</text>
</comment>
<sequence length="349" mass="37729">MPMPPDDSALSLLPDHPLAAHNTFGIAARARFAARITQAAQFEALHRDPRVANLPQLVLGGGSNIVFTRDFDGVVLLDEIAGRRVVREDDDAWYVEAGGGENWHAFVAWTLEHGMPGLENLALIPGTVGAAPIQNIGAYGLEMKAYFDSLVAVELATGRRERFDAARCAFGYRDSFFKREGRGRFAIVAVTFRLPKQWTPRLGYADVTRELDARGITPEAATPRDVFDAVVAIRRAKLPDPLVLGNAGSFFKNPVIDAAQFDALRARAPDVVSYPQPDGQVKLAAGWLIDRCGWKGRALGAAAVHDRQALVLVNRGGATGADVLALARAIQADVRAQFGVELEAEPVCL</sequence>
<organism>
    <name type="scientific">Burkholderia orbicola (strain AU 1054)</name>
    <dbReference type="NCBI Taxonomy" id="331271"/>
    <lineage>
        <taxon>Bacteria</taxon>
        <taxon>Pseudomonadati</taxon>
        <taxon>Pseudomonadota</taxon>
        <taxon>Betaproteobacteria</taxon>
        <taxon>Burkholderiales</taxon>
        <taxon>Burkholderiaceae</taxon>
        <taxon>Burkholderia</taxon>
        <taxon>Burkholderia cepacia complex</taxon>
        <taxon>Burkholderia orbicola</taxon>
    </lineage>
</organism>
<protein>
    <recommendedName>
        <fullName evidence="1">UDP-N-acetylenolpyruvoylglucosamine reductase</fullName>
        <ecNumber evidence="1">1.3.1.98</ecNumber>
    </recommendedName>
    <alternativeName>
        <fullName evidence="1">UDP-N-acetylmuramate dehydrogenase</fullName>
    </alternativeName>
</protein>
<gene>
    <name evidence="1" type="primary">murB</name>
    <name type="ordered locus">Bcen_1943</name>
</gene>
<feature type="chain" id="PRO_1000002868" description="UDP-N-acetylenolpyruvoylglucosamine reductase">
    <location>
        <begin position="1"/>
        <end position="349"/>
    </location>
</feature>
<feature type="domain" description="FAD-binding PCMH-type" evidence="1">
    <location>
        <begin position="25"/>
        <end position="197"/>
    </location>
</feature>
<feature type="active site" evidence="1">
    <location>
        <position position="173"/>
    </location>
</feature>
<feature type="active site" description="Proton donor" evidence="1">
    <location>
        <position position="249"/>
    </location>
</feature>
<feature type="active site" evidence="1">
    <location>
        <position position="345"/>
    </location>
</feature>
<evidence type="ECO:0000255" key="1">
    <source>
        <dbReference type="HAMAP-Rule" id="MF_00037"/>
    </source>
</evidence>
<dbReference type="EC" id="1.3.1.98" evidence="1"/>
<dbReference type="EMBL" id="CP000378">
    <property type="protein sequence ID" value="ABF76846.1"/>
    <property type="molecule type" value="Genomic_DNA"/>
</dbReference>
<dbReference type="SMR" id="Q1BU59"/>
<dbReference type="HOGENOM" id="CLU_035304_0_0_4"/>
<dbReference type="UniPathway" id="UPA00219"/>
<dbReference type="GO" id="GO:0005829">
    <property type="term" value="C:cytosol"/>
    <property type="evidence" value="ECO:0007669"/>
    <property type="project" value="TreeGrafter"/>
</dbReference>
<dbReference type="GO" id="GO:0071949">
    <property type="term" value="F:FAD binding"/>
    <property type="evidence" value="ECO:0007669"/>
    <property type="project" value="InterPro"/>
</dbReference>
<dbReference type="GO" id="GO:0008762">
    <property type="term" value="F:UDP-N-acetylmuramate dehydrogenase activity"/>
    <property type="evidence" value="ECO:0007669"/>
    <property type="project" value="UniProtKB-UniRule"/>
</dbReference>
<dbReference type="GO" id="GO:0051301">
    <property type="term" value="P:cell division"/>
    <property type="evidence" value="ECO:0007669"/>
    <property type="project" value="UniProtKB-KW"/>
</dbReference>
<dbReference type="GO" id="GO:0071555">
    <property type="term" value="P:cell wall organization"/>
    <property type="evidence" value="ECO:0007669"/>
    <property type="project" value="UniProtKB-KW"/>
</dbReference>
<dbReference type="GO" id="GO:0009252">
    <property type="term" value="P:peptidoglycan biosynthetic process"/>
    <property type="evidence" value="ECO:0007669"/>
    <property type="project" value="UniProtKB-UniRule"/>
</dbReference>
<dbReference type="GO" id="GO:0008360">
    <property type="term" value="P:regulation of cell shape"/>
    <property type="evidence" value="ECO:0007669"/>
    <property type="project" value="UniProtKB-KW"/>
</dbReference>
<dbReference type="Gene3D" id="3.30.465.10">
    <property type="match status" value="1"/>
</dbReference>
<dbReference type="Gene3D" id="3.90.78.10">
    <property type="entry name" value="UDP-N-acetylenolpyruvoylglucosamine reductase, C-terminal domain"/>
    <property type="match status" value="1"/>
</dbReference>
<dbReference type="Gene3D" id="3.30.43.10">
    <property type="entry name" value="Uridine Diphospho-n-acetylenolpyruvylglucosamine Reductase, domain 2"/>
    <property type="match status" value="1"/>
</dbReference>
<dbReference type="HAMAP" id="MF_00037">
    <property type="entry name" value="MurB"/>
    <property type="match status" value="1"/>
</dbReference>
<dbReference type="InterPro" id="IPR016166">
    <property type="entry name" value="FAD-bd_PCMH"/>
</dbReference>
<dbReference type="InterPro" id="IPR036318">
    <property type="entry name" value="FAD-bd_PCMH-like_sf"/>
</dbReference>
<dbReference type="InterPro" id="IPR016167">
    <property type="entry name" value="FAD-bd_PCMH_sub1"/>
</dbReference>
<dbReference type="InterPro" id="IPR016169">
    <property type="entry name" value="FAD-bd_PCMH_sub2"/>
</dbReference>
<dbReference type="InterPro" id="IPR003170">
    <property type="entry name" value="MurB"/>
</dbReference>
<dbReference type="InterPro" id="IPR011601">
    <property type="entry name" value="MurB_C"/>
</dbReference>
<dbReference type="InterPro" id="IPR036635">
    <property type="entry name" value="MurB_C_sf"/>
</dbReference>
<dbReference type="InterPro" id="IPR006094">
    <property type="entry name" value="Oxid_FAD_bind_N"/>
</dbReference>
<dbReference type="NCBIfam" id="TIGR00179">
    <property type="entry name" value="murB"/>
    <property type="match status" value="1"/>
</dbReference>
<dbReference type="NCBIfam" id="NF000755">
    <property type="entry name" value="PRK00046.1"/>
    <property type="match status" value="1"/>
</dbReference>
<dbReference type="NCBIfam" id="NF010478">
    <property type="entry name" value="PRK13903.1"/>
    <property type="match status" value="1"/>
</dbReference>
<dbReference type="PANTHER" id="PTHR21071">
    <property type="entry name" value="UDP-N-ACETYLENOLPYRUVOYLGLUCOSAMINE REDUCTASE"/>
    <property type="match status" value="1"/>
</dbReference>
<dbReference type="PANTHER" id="PTHR21071:SF4">
    <property type="entry name" value="UDP-N-ACETYLENOLPYRUVOYLGLUCOSAMINE REDUCTASE"/>
    <property type="match status" value="1"/>
</dbReference>
<dbReference type="Pfam" id="PF01565">
    <property type="entry name" value="FAD_binding_4"/>
    <property type="match status" value="1"/>
</dbReference>
<dbReference type="Pfam" id="PF02873">
    <property type="entry name" value="MurB_C"/>
    <property type="match status" value="1"/>
</dbReference>
<dbReference type="SUPFAM" id="SSF56176">
    <property type="entry name" value="FAD-binding/transporter-associated domain-like"/>
    <property type="match status" value="1"/>
</dbReference>
<dbReference type="SUPFAM" id="SSF56194">
    <property type="entry name" value="Uridine diphospho-N-Acetylenolpyruvylglucosamine reductase, MurB, C-terminal domain"/>
    <property type="match status" value="1"/>
</dbReference>
<dbReference type="PROSITE" id="PS51387">
    <property type="entry name" value="FAD_PCMH"/>
    <property type="match status" value="1"/>
</dbReference>